<sequence>MAEGKGFLRLEWARDHMPVIAEIRKRFLDEKPFKGINIAMALHVEAKTGIFSLLLKEGGANVRMASCNPLSSDDSVVESLKTDYGMPVFARKGETQEEYYENLQRTLEKPPDIIIDDGGDLTKLVHTERKDLSKNIMGGNEETTTGVVRLKAMEKAGVLLFPMFDVNDANMKHLFDNRYGTGQSTLDGIMNSTNLLIAGRNVVVAGYGYCGRGIAMRLKGMGANVIVTEIDPIKANEAIMDGFQVRRMNDAIRYADMVITATGMKDVVKYEDALVAKKNIVLANAGHFDNEVAVKEIEKHSLEKREVREFVKRYRLENGNTVDVIADGRLVNLAAGQGHPVEIMDLSFALQALTAEYLVKNHQNLEKKVYPVPPEIDRYVAEIRLKQFGGELDTLTEDQIKYLNSWDEGT</sequence>
<reference key="1">
    <citation type="journal article" date="2000" name="Proc. Natl. Acad. Sci. U.S.A.">
        <title>Archaeal adaptation to higher temperatures revealed by genomic sequence of Thermoplasma volcanium.</title>
        <authorList>
            <person name="Kawashima T."/>
            <person name="Amano N."/>
            <person name="Koike H."/>
            <person name="Makino S."/>
            <person name="Higuchi S."/>
            <person name="Kawashima-Ohya Y."/>
            <person name="Watanabe K."/>
            <person name="Yamazaki M."/>
            <person name="Kanehori K."/>
            <person name="Kawamoto T."/>
            <person name="Nunoshiba T."/>
            <person name="Yamamoto Y."/>
            <person name="Aramaki H."/>
            <person name="Makino K."/>
            <person name="Suzuki M."/>
        </authorList>
    </citation>
    <scope>NUCLEOTIDE SEQUENCE [LARGE SCALE GENOMIC DNA]</scope>
    <source>
        <strain>ATCC 51530 / DSM 4299 / JCM 9571 / NBRC 15438 / GSS1</strain>
    </source>
</reference>
<feature type="chain" id="PRO_0000117018" description="Adenosylhomocysteinase">
    <location>
        <begin position="1"/>
        <end position="410"/>
    </location>
</feature>
<feature type="binding site" evidence="1">
    <location>
        <position position="117"/>
    </location>
    <ligand>
        <name>substrate</name>
    </ligand>
</feature>
<feature type="binding site" evidence="1">
    <location>
        <position position="142"/>
    </location>
    <ligand>
        <name>substrate</name>
    </ligand>
</feature>
<feature type="binding site" evidence="1">
    <location>
        <begin position="143"/>
        <end position="145"/>
    </location>
    <ligand>
        <name>NAD(+)</name>
        <dbReference type="ChEBI" id="CHEBI:57540"/>
    </ligand>
</feature>
<feature type="binding site" evidence="1">
    <location>
        <position position="172"/>
    </location>
    <ligand>
        <name>substrate</name>
    </ligand>
</feature>
<feature type="binding site" evidence="1">
    <location>
        <position position="176"/>
    </location>
    <ligand>
        <name>substrate</name>
    </ligand>
</feature>
<feature type="binding site" evidence="1">
    <location>
        <position position="177"/>
    </location>
    <ligand>
        <name>NAD(+)</name>
        <dbReference type="ChEBI" id="CHEBI:57540"/>
    </ligand>
</feature>
<feature type="binding site" evidence="1">
    <location>
        <begin position="206"/>
        <end position="211"/>
    </location>
    <ligand>
        <name>NAD(+)</name>
        <dbReference type="ChEBI" id="CHEBI:57540"/>
    </ligand>
</feature>
<feature type="binding site" evidence="1">
    <location>
        <position position="229"/>
    </location>
    <ligand>
        <name>NAD(+)</name>
        <dbReference type="ChEBI" id="CHEBI:57540"/>
    </ligand>
</feature>
<feature type="binding site" evidence="1">
    <location>
        <begin position="285"/>
        <end position="287"/>
    </location>
    <ligand>
        <name>NAD(+)</name>
        <dbReference type="ChEBI" id="CHEBI:57540"/>
    </ligand>
</feature>
<feature type="binding site" evidence="1">
    <location>
        <position position="332"/>
    </location>
    <ligand>
        <name>NAD(+)</name>
        <dbReference type="ChEBI" id="CHEBI:57540"/>
    </ligand>
</feature>
<gene>
    <name evidence="1" type="primary">ahcY</name>
    <name type="ordered locus">TV1016</name>
    <name type="ORF">TVG1039754</name>
</gene>
<evidence type="ECO:0000255" key="1">
    <source>
        <dbReference type="HAMAP-Rule" id="MF_00563"/>
    </source>
</evidence>
<name>SAHH_THEVO</name>
<proteinExistence type="inferred from homology"/>
<comment type="function">
    <text evidence="1">May play a key role in the regulation of the intracellular concentration of adenosylhomocysteine.</text>
</comment>
<comment type="catalytic activity">
    <reaction evidence="1">
        <text>S-adenosyl-L-homocysteine + H2O = L-homocysteine + adenosine</text>
        <dbReference type="Rhea" id="RHEA:21708"/>
        <dbReference type="ChEBI" id="CHEBI:15377"/>
        <dbReference type="ChEBI" id="CHEBI:16335"/>
        <dbReference type="ChEBI" id="CHEBI:57856"/>
        <dbReference type="ChEBI" id="CHEBI:58199"/>
        <dbReference type="EC" id="3.13.2.1"/>
    </reaction>
</comment>
<comment type="cofactor">
    <cofactor evidence="1">
        <name>NAD(+)</name>
        <dbReference type="ChEBI" id="CHEBI:57540"/>
    </cofactor>
    <text evidence="1">Binds 1 NAD(+) per subunit.</text>
</comment>
<comment type="pathway">
    <text evidence="1">Amino-acid biosynthesis; L-homocysteine biosynthesis; L-homocysteine from S-adenosyl-L-homocysteine: step 1/1.</text>
</comment>
<comment type="subcellular location">
    <subcellularLocation>
        <location evidence="1">Cytoplasm</location>
    </subcellularLocation>
</comment>
<comment type="similarity">
    <text evidence="1">Belongs to the adenosylhomocysteinase family.</text>
</comment>
<organism>
    <name type="scientific">Thermoplasma volcanium (strain ATCC 51530 / DSM 4299 / JCM 9571 / NBRC 15438 / GSS1)</name>
    <dbReference type="NCBI Taxonomy" id="273116"/>
    <lineage>
        <taxon>Archaea</taxon>
        <taxon>Methanobacteriati</taxon>
        <taxon>Thermoplasmatota</taxon>
        <taxon>Thermoplasmata</taxon>
        <taxon>Thermoplasmatales</taxon>
        <taxon>Thermoplasmataceae</taxon>
        <taxon>Thermoplasma</taxon>
    </lineage>
</organism>
<dbReference type="EC" id="3.13.2.1" evidence="1"/>
<dbReference type="EMBL" id="BA000011">
    <property type="protein sequence ID" value="BAB60158.1"/>
    <property type="molecule type" value="Genomic_DNA"/>
</dbReference>
<dbReference type="SMR" id="Q979Z4"/>
<dbReference type="STRING" id="273116.gene:9381809"/>
<dbReference type="PaxDb" id="273116-14325254"/>
<dbReference type="KEGG" id="tvo:TVG1039754"/>
<dbReference type="eggNOG" id="arCOG04137">
    <property type="taxonomic scope" value="Archaea"/>
</dbReference>
<dbReference type="HOGENOM" id="CLU_025194_2_1_2"/>
<dbReference type="OrthoDB" id="8479at2157"/>
<dbReference type="PhylomeDB" id="Q979Z4"/>
<dbReference type="UniPathway" id="UPA00314">
    <property type="reaction ID" value="UER00076"/>
</dbReference>
<dbReference type="Proteomes" id="UP000001017">
    <property type="component" value="Chromosome"/>
</dbReference>
<dbReference type="GO" id="GO:0005829">
    <property type="term" value="C:cytosol"/>
    <property type="evidence" value="ECO:0007669"/>
    <property type="project" value="TreeGrafter"/>
</dbReference>
<dbReference type="GO" id="GO:0004013">
    <property type="term" value="F:adenosylhomocysteinase activity"/>
    <property type="evidence" value="ECO:0007669"/>
    <property type="project" value="UniProtKB-UniRule"/>
</dbReference>
<dbReference type="GO" id="GO:0071269">
    <property type="term" value="P:L-homocysteine biosynthetic process"/>
    <property type="evidence" value="ECO:0007669"/>
    <property type="project" value="UniProtKB-UniRule"/>
</dbReference>
<dbReference type="GO" id="GO:0006730">
    <property type="term" value="P:one-carbon metabolic process"/>
    <property type="evidence" value="ECO:0007669"/>
    <property type="project" value="UniProtKB-KW"/>
</dbReference>
<dbReference type="GO" id="GO:0033353">
    <property type="term" value="P:S-adenosylmethionine cycle"/>
    <property type="evidence" value="ECO:0007669"/>
    <property type="project" value="TreeGrafter"/>
</dbReference>
<dbReference type="CDD" id="cd00401">
    <property type="entry name" value="SAHH"/>
    <property type="match status" value="1"/>
</dbReference>
<dbReference type="Gene3D" id="3.40.50.1480">
    <property type="entry name" value="Adenosylhomocysteinase-like"/>
    <property type="match status" value="1"/>
</dbReference>
<dbReference type="Gene3D" id="3.40.50.720">
    <property type="entry name" value="NAD(P)-binding Rossmann-like Domain"/>
    <property type="match status" value="1"/>
</dbReference>
<dbReference type="HAMAP" id="MF_00563">
    <property type="entry name" value="AdoHcyase"/>
    <property type="match status" value="1"/>
</dbReference>
<dbReference type="InterPro" id="IPR042172">
    <property type="entry name" value="Adenosylhomocyst_ase-like_sf"/>
</dbReference>
<dbReference type="InterPro" id="IPR000043">
    <property type="entry name" value="Adenosylhomocysteinase-like"/>
</dbReference>
<dbReference type="InterPro" id="IPR015878">
    <property type="entry name" value="Ado_hCys_hydrolase_NAD-bd"/>
</dbReference>
<dbReference type="InterPro" id="IPR036291">
    <property type="entry name" value="NAD(P)-bd_dom_sf"/>
</dbReference>
<dbReference type="InterPro" id="IPR020082">
    <property type="entry name" value="S-Ado-L-homoCys_hydrolase_CS"/>
</dbReference>
<dbReference type="NCBIfam" id="TIGR00936">
    <property type="entry name" value="ahcY"/>
    <property type="match status" value="1"/>
</dbReference>
<dbReference type="NCBIfam" id="NF004005">
    <property type="entry name" value="PRK05476.2-3"/>
    <property type="match status" value="1"/>
</dbReference>
<dbReference type="PANTHER" id="PTHR23420">
    <property type="entry name" value="ADENOSYLHOMOCYSTEINASE"/>
    <property type="match status" value="1"/>
</dbReference>
<dbReference type="PANTHER" id="PTHR23420:SF0">
    <property type="entry name" value="ADENOSYLHOMOCYSTEINASE"/>
    <property type="match status" value="1"/>
</dbReference>
<dbReference type="Pfam" id="PF05221">
    <property type="entry name" value="AdoHcyase"/>
    <property type="match status" value="2"/>
</dbReference>
<dbReference type="Pfam" id="PF00670">
    <property type="entry name" value="AdoHcyase_NAD"/>
    <property type="match status" value="1"/>
</dbReference>
<dbReference type="PIRSF" id="PIRSF001109">
    <property type="entry name" value="Ad_hcy_hydrolase"/>
    <property type="match status" value="1"/>
</dbReference>
<dbReference type="SMART" id="SM00996">
    <property type="entry name" value="AdoHcyase"/>
    <property type="match status" value="1"/>
</dbReference>
<dbReference type="SMART" id="SM00997">
    <property type="entry name" value="AdoHcyase_NAD"/>
    <property type="match status" value="1"/>
</dbReference>
<dbReference type="SUPFAM" id="SSF52283">
    <property type="entry name" value="Formate/glycerate dehydrogenase catalytic domain-like"/>
    <property type="match status" value="1"/>
</dbReference>
<dbReference type="SUPFAM" id="SSF51735">
    <property type="entry name" value="NAD(P)-binding Rossmann-fold domains"/>
    <property type="match status" value="1"/>
</dbReference>
<dbReference type="PROSITE" id="PS00738">
    <property type="entry name" value="ADOHCYASE_1"/>
    <property type="match status" value="1"/>
</dbReference>
<dbReference type="PROSITE" id="PS00739">
    <property type="entry name" value="ADOHCYASE_2"/>
    <property type="match status" value="1"/>
</dbReference>
<keyword id="KW-0963">Cytoplasm</keyword>
<keyword id="KW-0378">Hydrolase</keyword>
<keyword id="KW-0520">NAD</keyword>
<keyword id="KW-0554">One-carbon metabolism</keyword>
<protein>
    <recommendedName>
        <fullName evidence="1">Adenosylhomocysteinase</fullName>
        <ecNumber evidence="1">3.13.2.1</ecNumber>
    </recommendedName>
    <alternativeName>
        <fullName evidence="1">S-adenosyl-L-homocysteine hydrolase</fullName>
        <shortName evidence="1">AdoHcyase</shortName>
    </alternativeName>
</protein>
<accession>Q979Z4</accession>